<gene>
    <name type="ORF">SJCHGC01275</name>
    <name type="ORF">SJCHGC01276</name>
</gene>
<reference key="1">
    <citation type="journal article" date="2006" name="PLoS Pathog.">
        <title>New perspectives on host-parasite interplay by comparative transcriptomic and proteomic analyses of Schistosoma japonicum.</title>
        <authorList>
            <person name="Liu F."/>
            <person name="Lu J."/>
            <person name="Hu W."/>
            <person name="Wang S.-Y."/>
            <person name="Cui S.-J."/>
            <person name="Chi M."/>
            <person name="Yan Q."/>
            <person name="Wang X.-R."/>
            <person name="Song H.-D."/>
            <person name="Xu X.-N."/>
            <person name="Wang J.-J."/>
            <person name="Zhang X.-L."/>
            <person name="Zhang X."/>
            <person name="Wang Z.-Q."/>
            <person name="Xue C.-L."/>
            <person name="Brindley P.J."/>
            <person name="McManus D.P."/>
            <person name="Yang P.-Y."/>
            <person name="Feng Z."/>
            <person name="Chen Z."/>
            <person name="Han Z.-G."/>
        </authorList>
    </citation>
    <scope>NUCLEOTIDE SEQUENCE [LARGE SCALE MRNA]</scope>
</reference>
<comment type="subunit">
    <text evidence="1">Component of the small ribosomal subunit. Mature ribosomes consist of a small (40S) and a large (60S) subunit. The 40S subunit contains about 33 different proteins and 1 molecule of RNA (18S). The 60S subunit contains about 49 different proteins and 3 molecules of RNA (28S, 5.8S and 5S).</text>
</comment>
<comment type="subcellular location">
    <subcellularLocation>
        <location evidence="1">Cytoplasm</location>
    </subcellularLocation>
</comment>
<comment type="alternative products">
    <event type="alternative splicing"/>
    <isoform>
        <id>Q5DAA3-1</id>
        <name>1</name>
        <sequence type="displayed"/>
    </isoform>
    <isoform>
        <id>Q5DAA3-2</id>
        <name>2</name>
        <sequence type="described" ref="VSP_038424"/>
    </isoform>
</comment>
<comment type="similarity">
    <text evidence="1">Belongs to the eukaryotic ribosomal protein eS1 family.</text>
</comment>
<accession>Q5DAA3</accession>
<accession>Q5BTH2</accession>
<proteinExistence type="evidence at transcript level"/>
<dbReference type="EMBL" id="AY815521">
    <property type="protein sequence ID" value="AAW27253.1"/>
    <property type="molecule type" value="mRNA"/>
</dbReference>
<dbReference type="EMBL" id="AY914942">
    <property type="protein sequence ID" value="AAX30163.1"/>
    <property type="molecule type" value="mRNA"/>
</dbReference>
<dbReference type="SMR" id="Q5DAA3"/>
<dbReference type="GO" id="GO:0022627">
    <property type="term" value="C:cytosolic small ribosomal subunit"/>
    <property type="evidence" value="ECO:0007669"/>
    <property type="project" value="UniProtKB-UniRule"/>
</dbReference>
<dbReference type="GO" id="GO:0003735">
    <property type="term" value="F:structural constituent of ribosome"/>
    <property type="evidence" value="ECO:0007669"/>
    <property type="project" value="UniProtKB-UniRule"/>
</dbReference>
<dbReference type="GO" id="GO:0006412">
    <property type="term" value="P:translation"/>
    <property type="evidence" value="ECO:0007669"/>
    <property type="project" value="UniProtKB-UniRule"/>
</dbReference>
<dbReference type="HAMAP" id="MF_03122">
    <property type="entry name" value="Ribosomal_eS1_euk"/>
    <property type="match status" value="1"/>
</dbReference>
<dbReference type="InterPro" id="IPR001593">
    <property type="entry name" value="Ribosomal_eS1"/>
</dbReference>
<dbReference type="InterPro" id="IPR027500">
    <property type="entry name" value="Ribosomal_eS1_euk"/>
</dbReference>
<dbReference type="PANTHER" id="PTHR11830">
    <property type="entry name" value="40S RIBOSOMAL PROTEIN S3A"/>
    <property type="match status" value="1"/>
</dbReference>
<dbReference type="Pfam" id="PF01015">
    <property type="entry name" value="Ribosomal_S3Ae"/>
    <property type="match status" value="1"/>
</dbReference>
<dbReference type="SMART" id="SM01397">
    <property type="entry name" value="Ribosomal_S3Ae"/>
    <property type="match status" value="1"/>
</dbReference>
<name>RS3A_SCHJA</name>
<feature type="initiator methionine" description="Removed" evidence="1">
    <location>
        <position position="1"/>
    </location>
</feature>
<feature type="chain" id="PRO_0000389325" description="Small ribosomal subunit protein eS1">
    <location>
        <begin position="2"/>
        <end position="259"/>
    </location>
</feature>
<feature type="region of interest" description="Disordered" evidence="2">
    <location>
        <begin position="1"/>
        <end position="23"/>
    </location>
</feature>
<feature type="region of interest" description="Disordered" evidence="2">
    <location>
        <begin position="235"/>
        <end position="259"/>
    </location>
</feature>
<feature type="compositionally biased region" description="Basic residues" evidence="2">
    <location>
        <begin position="8"/>
        <end position="19"/>
    </location>
</feature>
<feature type="compositionally biased region" description="Basic and acidic residues" evidence="2">
    <location>
        <begin position="246"/>
        <end position="259"/>
    </location>
</feature>
<feature type="splice variant" id="VSP_038424" description="In isoform 2." evidence="3">
    <location>
        <begin position="190"/>
        <end position="259"/>
    </location>
</feature>
<organism>
    <name type="scientific">Schistosoma japonicum</name>
    <name type="common">Blood fluke</name>
    <dbReference type="NCBI Taxonomy" id="6182"/>
    <lineage>
        <taxon>Eukaryota</taxon>
        <taxon>Metazoa</taxon>
        <taxon>Spiralia</taxon>
        <taxon>Lophotrochozoa</taxon>
        <taxon>Platyhelminthes</taxon>
        <taxon>Trematoda</taxon>
        <taxon>Digenea</taxon>
        <taxon>Strigeidida</taxon>
        <taxon>Schistosomatoidea</taxon>
        <taxon>Schistosomatidae</taxon>
        <taxon>Schistosoma</taxon>
    </lineage>
</organism>
<sequence>MAVGGQKKVTKGGKKGGKKKTADPFSKKEWYDIKAPAMFPKRTCARTLVTRTQGTRIASEALKGRVVTLSLGDLSEKNEEVFRKFKLQIEDVQGRHCLTNFHGLELTRDKLCSVVVKWRSTIEAHVDVKTTDGYLLRFFIITFTPSVPRSERLHSYAQTTRIKRIRARLVEIIQQEVSTCDLKEVVNKLIPDSIAQDARKAASWIYPLGETFIRKVKVLKRPKADLARLMELHGESKSTAPGETVSRPDHYEPPKVDSV</sequence>
<keyword id="KW-0025">Alternative splicing</keyword>
<keyword id="KW-0963">Cytoplasm</keyword>
<keyword id="KW-0687">Ribonucleoprotein</keyword>
<keyword id="KW-0689">Ribosomal protein</keyword>
<evidence type="ECO:0000255" key="1">
    <source>
        <dbReference type="HAMAP-Rule" id="MF_03122"/>
    </source>
</evidence>
<evidence type="ECO:0000256" key="2">
    <source>
        <dbReference type="SAM" id="MobiDB-lite"/>
    </source>
</evidence>
<evidence type="ECO:0000305" key="3"/>
<protein>
    <recommendedName>
        <fullName evidence="1">Small ribosomal subunit protein eS1</fullName>
    </recommendedName>
    <alternativeName>
        <fullName evidence="3">40S ribosomal protein S3a</fullName>
    </alternativeName>
</protein>